<name>FLUC_CAUVC</name>
<accession>Q9A6V2</accession>
<feature type="chain" id="PRO_0000110083" description="Fluoride-specific ion channel FluC">
    <location>
        <begin position="1"/>
        <end position="127"/>
    </location>
</feature>
<feature type="transmembrane region" description="Helical" evidence="1">
    <location>
        <begin position="4"/>
        <end position="24"/>
    </location>
</feature>
<feature type="transmembrane region" description="Helical" evidence="1">
    <location>
        <begin position="36"/>
        <end position="56"/>
    </location>
</feature>
<feature type="transmembrane region" description="Helical" evidence="1">
    <location>
        <begin position="72"/>
        <end position="92"/>
    </location>
</feature>
<feature type="transmembrane region" description="Helical" evidence="1">
    <location>
        <begin position="101"/>
        <end position="121"/>
    </location>
</feature>
<feature type="binding site" evidence="1">
    <location>
        <position position="76"/>
    </location>
    <ligand>
        <name>Na(+)</name>
        <dbReference type="ChEBI" id="CHEBI:29101"/>
        <note>structural</note>
    </ligand>
</feature>
<feature type="binding site" evidence="1">
    <location>
        <position position="79"/>
    </location>
    <ligand>
        <name>Na(+)</name>
        <dbReference type="ChEBI" id="CHEBI:29101"/>
        <note>structural</note>
    </ligand>
</feature>
<keyword id="KW-0997">Cell inner membrane</keyword>
<keyword id="KW-1003">Cell membrane</keyword>
<keyword id="KW-0407">Ion channel</keyword>
<keyword id="KW-0406">Ion transport</keyword>
<keyword id="KW-0472">Membrane</keyword>
<keyword id="KW-0479">Metal-binding</keyword>
<keyword id="KW-1185">Reference proteome</keyword>
<keyword id="KW-0915">Sodium</keyword>
<keyword id="KW-0812">Transmembrane</keyword>
<keyword id="KW-1133">Transmembrane helix</keyword>
<keyword id="KW-0813">Transport</keyword>
<protein>
    <recommendedName>
        <fullName evidence="1">Fluoride-specific ion channel FluC</fullName>
    </recommendedName>
</protein>
<proteinExistence type="inferred from homology"/>
<organism>
    <name type="scientific">Caulobacter vibrioides (strain ATCC 19089 / CIP 103742 / CB 15)</name>
    <name type="common">Caulobacter crescentus</name>
    <dbReference type="NCBI Taxonomy" id="190650"/>
    <lineage>
        <taxon>Bacteria</taxon>
        <taxon>Pseudomonadati</taxon>
        <taxon>Pseudomonadota</taxon>
        <taxon>Alphaproteobacteria</taxon>
        <taxon>Caulobacterales</taxon>
        <taxon>Caulobacteraceae</taxon>
        <taxon>Caulobacter</taxon>
    </lineage>
</organism>
<gene>
    <name evidence="1" type="primary">fluC</name>
    <name evidence="1" type="synonym">crcB</name>
    <name type="ordered locus">CC_1981</name>
</gene>
<evidence type="ECO:0000255" key="1">
    <source>
        <dbReference type="HAMAP-Rule" id="MF_00454"/>
    </source>
</evidence>
<comment type="function">
    <text evidence="1">Fluoride-specific ion channel. Important for reducing fluoride concentration in the cell, thus reducing its toxicity.</text>
</comment>
<comment type="catalytic activity">
    <reaction evidence="1">
        <text>fluoride(in) = fluoride(out)</text>
        <dbReference type="Rhea" id="RHEA:76159"/>
        <dbReference type="ChEBI" id="CHEBI:17051"/>
    </reaction>
    <physiologicalReaction direction="left-to-right" evidence="1">
        <dbReference type="Rhea" id="RHEA:76160"/>
    </physiologicalReaction>
</comment>
<comment type="activity regulation">
    <text evidence="1">Na(+) is not transported, but it plays an essential structural role and its presence is essential for fluoride channel function.</text>
</comment>
<comment type="subcellular location">
    <subcellularLocation>
        <location evidence="1">Cell inner membrane</location>
        <topology evidence="1">Multi-pass membrane protein</topology>
    </subcellularLocation>
</comment>
<comment type="similarity">
    <text evidence="1">Belongs to the fluoride channel Fluc/FEX (TC 1.A.43) family.</text>
</comment>
<sequence>MNKLLLVAAGGAVGSVARYLVGVGAMRVMGPGWPYGTFTVNVVGGFLMGCLASWLAHRGNTSSETWRVMLGVGVLGGFTTFSSFSLETALMIQKRAYGQAFTYSAASVLLAIAALFAGLLVARKVFA</sequence>
<reference key="1">
    <citation type="journal article" date="2001" name="Proc. Natl. Acad. Sci. U.S.A.">
        <title>Complete genome sequence of Caulobacter crescentus.</title>
        <authorList>
            <person name="Nierman W.C."/>
            <person name="Feldblyum T.V."/>
            <person name="Laub M.T."/>
            <person name="Paulsen I.T."/>
            <person name="Nelson K.E."/>
            <person name="Eisen J.A."/>
            <person name="Heidelberg J.F."/>
            <person name="Alley M.R.K."/>
            <person name="Ohta N."/>
            <person name="Maddock J.R."/>
            <person name="Potocka I."/>
            <person name="Nelson W.C."/>
            <person name="Newton A."/>
            <person name="Stephens C."/>
            <person name="Phadke N.D."/>
            <person name="Ely B."/>
            <person name="DeBoy R.T."/>
            <person name="Dodson R.J."/>
            <person name="Durkin A.S."/>
            <person name="Gwinn M.L."/>
            <person name="Haft D.H."/>
            <person name="Kolonay J.F."/>
            <person name="Smit J."/>
            <person name="Craven M.B."/>
            <person name="Khouri H.M."/>
            <person name="Shetty J."/>
            <person name="Berry K.J."/>
            <person name="Utterback T.R."/>
            <person name="Tran K."/>
            <person name="Wolf A.M."/>
            <person name="Vamathevan J.J."/>
            <person name="Ermolaeva M.D."/>
            <person name="White O."/>
            <person name="Salzberg S.L."/>
            <person name="Venter J.C."/>
            <person name="Shapiro L."/>
            <person name="Fraser C.M."/>
        </authorList>
    </citation>
    <scope>NUCLEOTIDE SEQUENCE [LARGE SCALE GENOMIC DNA]</scope>
    <source>
        <strain>ATCC 19089 / CIP 103742 / CB 15</strain>
    </source>
</reference>
<dbReference type="EMBL" id="AE005673">
    <property type="protein sequence ID" value="AAK23956.1"/>
    <property type="molecule type" value="Genomic_DNA"/>
</dbReference>
<dbReference type="PIR" id="H87494">
    <property type="entry name" value="H87494"/>
</dbReference>
<dbReference type="RefSeq" id="NP_420788.1">
    <property type="nucleotide sequence ID" value="NC_002696.2"/>
</dbReference>
<dbReference type="RefSeq" id="WP_010919847.1">
    <property type="nucleotide sequence ID" value="NC_002696.2"/>
</dbReference>
<dbReference type="SMR" id="Q9A6V2"/>
<dbReference type="STRING" id="190650.CC_1981"/>
<dbReference type="EnsemblBacteria" id="AAK23956">
    <property type="protein sequence ID" value="AAK23956"/>
    <property type="gene ID" value="CC_1981"/>
</dbReference>
<dbReference type="KEGG" id="ccr:CC_1981"/>
<dbReference type="PATRIC" id="fig|190650.5.peg.1999"/>
<dbReference type="eggNOG" id="COG0239">
    <property type="taxonomic scope" value="Bacteria"/>
</dbReference>
<dbReference type="HOGENOM" id="CLU_114342_2_3_5"/>
<dbReference type="BioCyc" id="CAULO:CC1981-MONOMER"/>
<dbReference type="Proteomes" id="UP000001816">
    <property type="component" value="Chromosome"/>
</dbReference>
<dbReference type="GO" id="GO:0005886">
    <property type="term" value="C:plasma membrane"/>
    <property type="evidence" value="ECO:0007669"/>
    <property type="project" value="UniProtKB-SubCell"/>
</dbReference>
<dbReference type="GO" id="GO:0062054">
    <property type="term" value="F:fluoride channel activity"/>
    <property type="evidence" value="ECO:0007669"/>
    <property type="project" value="UniProtKB-UniRule"/>
</dbReference>
<dbReference type="GO" id="GO:0046872">
    <property type="term" value="F:metal ion binding"/>
    <property type="evidence" value="ECO:0007669"/>
    <property type="project" value="UniProtKB-KW"/>
</dbReference>
<dbReference type="GO" id="GO:0140114">
    <property type="term" value="P:cellular detoxification of fluoride"/>
    <property type="evidence" value="ECO:0007669"/>
    <property type="project" value="UniProtKB-UniRule"/>
</dbReference>
<dbReference type="HAMAP" id="MF_00454">
    <property type="entry name" value="FluC"/>
    <property type="match status" value="1"/>
</dbReference>
<dbReference type="InterPro" id="IPR003691">
    <property type="entry name" value="FluC"/>
</dbReference>
<dbReference type="NCBIfam" id="TIGR00494">
    <property type="entry name" value="crcB"/>
    <property type="match status" value="1"/>
</dbReference>
<dbReference type="NCBIfam" id="NF010791">
    <property type="entry name" value="PRK14195.1"/>
    <property type="match status" value="1"/>
</dbReference>
<dbReference type="PANTHER" id="PTHR28259">
    <property type="entry name" value="FLUORIDE EXPORT PROTEIN 1-RELATED"/>
    <property type="match status" value="1"/>
</dbReference>
<dbReference type="PANTHER" id="PTHR28259:SF1">
    <property type="entry name" value="FLUORIDE EXPORT PROTEIN 1-RELATED"/>
    <property type="match status" value="1"/>
</dbReference>
<dbReference type="Pfam" id="PF02537">
    <property type="entry name" value="CRCB"/>
    <property type="match status" value="1"/>
</dbReference>